<comment type="function">
    <text evidence="1">Represses ulaG and the ulaABCDEF operon.</text>
</comment>
<comment type="subcellular location">
    <subcellularLocation>
        <location evidence="1">Cytoplasm</location>
    </subcellularLocation>
</comment>
<feature type="chain" id="PRO_1000147160" description="HTH-type transcriptional regulator UlaR">
    <location>
        <begin position="1"/>
        <end position="251"/>
    </location>
</feature>
<feature type="domain" description="HTH deoR-type" evidence="1">
    <location>
        <begin position="3"/>
        <end position="58"/>
    </location>
</feature>
<feature type="DNA-binding region" description="H-T-H motif" evidence="1">
    <location>
        <begin position="20"/>
        <end position="39"/>
    </location>
</feature>
<name>ULAR_ECO5E</name>
<keyword id="KW-0963">Cytoplasm</keyword>
<keyword id="KW-0238">DNA-binding</keyword>
<keyword id="KW-0678">Repressor</keyword>
<keyword id="KW-0804">Transcription</keyword>
<keyword id="KW-0805">Transcription regulation</keyword>
<proteinExistence type="inferred from homology"/>
<accession>B5Z2J7</accession>
<sequence>MTEAQRHQILLEMLAQLGFVTVEKVVERLGISPATARRDINKLDESGKLKKVRNGAEAITQQRPRWTPMNLHQAQNHDEKVRIAKAASQLVNPGESVVINCGSTAFLLGREMCGKPVQIITNYLPLANYLIDQEHDSVIIMGGQYNKSQSITLSPQGSENSLYAGHWMFTSGKGLTAEGLYKTDMLTAMAEQKMLSVVGKLVVLVDSSKIGERAGMLFSRADQIDMLITGKNANPEILQQLEAQGVSILRV</sequence>
<reference key="1">
    <citation type="journal article" date="2011" name="Proc. Natl. Acad. Sci. U.S.A.">
        <title>Genomic anatomy of Escherichia coli O157:H7 outbreaks.</title>
        <authorList>
            <person name="Eppinger M."/>
            <person name="Mammel M.K."/>
            <person name="Leclerc J.E."/>
            <person name="Ravel J."/>
            <person name="Cebula T.A."/>
        </authorList>
    </citation>
    <scope>NUCLEOTIDE SEQUENCE [LARGE SCALE GENOMIC DNA]</scope>
    <source>
        <strain>EC4115 / EHEC</strain>
    </source>
</reference>
<dbReference type="EMBL" id="CP001164">
    <property type="protein sequence ID" value="ACI38131.1"/>
    <property type="molecule type" value="Genomic_DNA"/>
</dbReference>
<dbReference type="RefSeq" id="WP_000133631.1">
    <property type="nucleotide sequence ID" value="NC_011353.1"/>
</dbReference>
<dbReference type="SMR" id="B5Z2J7"/>
<dbReference type="GeneID" id="75202425"/>
<dbReference type="KEGG" id="ecf:ECH74115_5706"/>
<dbReference type="HOGENOM" id="CLU_060699_3_2_6"/>
<dbReference type="GO" id="GO:0005737">
    <property type="term" value="C:cytoplasm"/>
    <property type="evidence" value="ECO:0007669"/>
    <property type="project" value="UniProtKB-SubCell"/>
</dbReference>
<dbReference type="GO" id="GO:0003677">
    <property type="term" value="F:DNA binding"/>
    <property type="evidence" value="ECO:0007669"/>
    <property type="project" value="UniProtKB-KW"/>
</dbReference>
<dbReference type="GO" id="GO:0003700">
    <property type="term" value="F:DNA-binding transcription factor activity"/>
    <property type="evidence" value="ECO:0007669"/>
    <property type="project" value="InterPro"/>
</dbReference>
<dbReference type="GO" id="GO:0045892">
    <property type="term" value="P:negative regulation of DNA-templated transcription"/>
    <property type="evidence" value="ECO:0007669"/>
    <property type="project" value="UniProtKB-UniRule"/>
</dbReference>
<dbReference type="FunFam" id="1.10.10.10:FF:000160">
    <property type="entry name" value="HTH-type transcriptional regulator UlaR"/>
    <property type="match status" value="1"/>
</dbReference>
<dbReference type="Gene3D" id="1.10.10.10">
    <property type="entry name" value="Winged helix-like DNA-binding domain superfamily/Winged helix DNA-binding domain"/>
    <property type="match status" value="1"/>
</dbReference>
<dbReference type="HAMAP" id="MF_01563">
    <property type="entry name" value="HTH_type_UlaR"/>
    <property type="match status" value="1"/>
</dbReference>
<dbReference type="InterPro" id="IPR050313">
    <property type="entry name" value="Carb_Metab_HTH_regulators"/>
</dbReference>
<dbReference type="InterPro" id="IPR014036">
    <property type="entry name" value="DeoR-like_C"/>
</dbReference>
<dbReference type="InterPro" id="IPR001034">
    <property type="entry name" value="DeoR_HTH"/>
</dbReference>
<dbReference type="InterPro" id="IPR037171">
    <property type="entry name" value="NagB/RpiA_transferase-like"/>
</dbReference>
<dbReference type="InterPro" id="IPR018356">
    <property type="entry name" value="Tscrpt_reg_HTH_DeoR_CS"/>
</dbReference>
<dbReference type="InterPro" id="IPR023711">
    <property type="entry name" value="Tscrpt_reg_HTH_UlaR"/>
</dbReference>
<dbReference type="InterPro" id="IPR036388">
    <property type="entry name" value="WH-like_DNA-bd_sf"/>
</dbReference>
<dbReference type="InterPro" id="IPR036390">
    <property type="entry name" value="WH_DNA-bd_sf"/>
</dbReference>
<dbReference type="NCBIfam" id="NF010034">
    <property type="entry name" value="PRK13509.1"/>
    <property type="match status" value="1"/>
</dbReference>
<dbReference type="PANTHER" id="PTHR30363">
    <property type="entry name" value="HTH-TYPE TRANSCRIPTIONAL REGULATOR SRLR-RELATED"/>
    <property type="match status" value="1"/>
</dbReference>
<dbReference type="PANTHER" id="PTHR30363:SF55">
    <property type="entry name" value="HTH-TYPE TRANSCRIPTIONAL REGULATOR ULAR"/>
    <property type="match status" value="1"/>
</dbReference>
<dbReference type="Pfam" id="PF00455">
    <property type="entry name" value="DeoRC"/>
    <property type="match status" value="1"/>
</dbReference>
<dbReference type="Pfam" id="PF08220">
    <property type="entry name" value="HTH_DeoR"/>
    <property type="match status" value="1"/>
</dbReference>
<dbReference type="PRINTS" id="PR00037">
    <property type="entry name" value="HTHLACR"/>
</dbReference>
<dbReference type="SMART" id="SM01134">
    <property type="entry name" value="DeoRC"/>
    <property type="match status" value="1"/>
</dbReference>
<dbReference type="SMART" id="SM00420">
    <property type="entry name" value="HTH_DEOR"/>
    <property type="match status" value="1"/>
</dbReference>
<dbReference type="SUPFAM" id="SSF100950">
    <property type="entry name" value="NagB/RpiA/CoA transferase-like"/>
    <property type="match status" value="1"/>
</dbReference>
<dbReference type="SUPFAM" id="SSF46785">
    <property type="entry name" value="Winged helix' DNA-binding domain"/>
    <property type="match status" value="1"/>
</dbReference>
<dbReference type="PROSITE" id="PS00894">
    <property type="entry name" value="HTH_DEOR_1"/>
    <property type="match status" value="1"/>
</dbReference>
<dbReference type="PROSITE" id="PS51000">
    <property type="entry name" value="HTH_DEOR_2"/>
    <property type="match status" value="1"/>
</dbReference>
<protein>
    <recommendedName>
        <fullName evidence="1">HTH-type transcriptional regulator UlaR</fullName>
    </recommendedName>
</protein>
<evidence type="ECO:0000255" key="1">
    <source>
        <dbReference type="HAMAP-Rule" id="MF_01563"/>
    </source>
</evidence>
<organism>
    <name type="scientific">Escherichia coli O157:H7 (strain EC4115 / EHEC)</name>
    <dbReference type="NCBI Taxonomy" id="444450"/>
    <lineage>
        <taxon>Bacteria</taxon>
        <taxon>Pseudomonadati</taxon>
        <taxon>Pseudomonadota</taxon>
        <taxon>Gammaproteobacteria</taxon>
        <taxon>Enterobacterales</taxon>
        <taxon>Enterobacteriaceae</taxon>
        <taxon>Escherichia</taxon>
    </lineage>
</organism>
<gene>
    <name evidence="1" type="primary">ulaR</name>
    <name type="ordered locus">ECH74115_5706</name>
</gene>